<proteinExistence type="evidence at transcript level"/>
<evidence type="ECO:0000255" key="1">
    <source>
        <dbReference type="PROSITE-ProRule" id="PRU00238"/>
    </source>
</evidence>
<accession>Q45XH5</accession>
<reference key="1">
    <citation type="submission" date="2005-06" db="EMBL/GenBank/DDBJ databases">
        <title>Atypical molecular evolution of afrotherian and xenarthran beta-globin cluster genes.</title>
        <authorList>
            <person name="Sloan A.M."/>
            <person name="Campbell K.L."/>
        </authorList>
    </citation>
    <scope>NUCLEOTIDE SEQUENCE [GENOMIC DNA]</scope>
</reference>
<comment type="function">
    <text>Gamma chains make up the fetal hemoglobin F, in combination with alpha chains.</text>
</comment>
<comment type="subunit">
    <text>Heterotetramer of two alpha chains and two gamma chains in fetal hemoglobin (Hb F).</text>
</comment>
<comment type="tissue specificity">
    <text>Red blood cells.</text>
</comment>
<comment type="similarity">
    <text evidence="1">Belongs to the globin family.</text>
</comment>
<feature type="chain" id="PRO_0000053247" description="Hemoglobin subunit gamma">
    <location>
        <begin position="1"/>
        <end position="147"/>
    </location>
</feature>
<feature type="domain" description="Globin" evidence="1">
    <location>
        <begin position="3"/>
        <end position="147"/>
    </location>
</feature>
<feature type="binding site" description="distal binding residue" evidence="1">
    <location>
        <position position="64"/>
    </location>
    <ligand>
        <name>heme b</name>
        <dbReference type="ChEBI" id="CHEBI:60344"/>
    </ligand>
    <ligandPart>
        <name>Fe</name>
        <dbReference type="ChEBI" id="CHEBI:18248"/>
    </ligandPart>
</feature>
<feature type="binding site" description="proximal binding residue" evidence="1">
    <location>
        <position position="93"/>
    </location>
    <ligand>
        <name>heme b</name>
        <dbReference type="ChEBI" id="CHEBI:60344"/>
    </ligand>
    <ligandPart>
        <name>Fe</name>
        <dbReference type="ChEBI" id="CHEBI:18248"/>
    </ligandPart>
</feature>
<sequence length="147" mass="16193">MVYFTAEEKAAITSLWGKVNVEEAGGKALGRLLIVYPWTQRFFDKFGNLSSASAIMGNPKIKAHGKKVLNSFGDAVENPDNLKGTFAKLSELHCDKLLVDPEDFRLLGNVIVIVLANHFGKEFTPQVQAAWQKMVTGVASALARKYH</sequence>
<protein>
    <recommendedName>
        <fullName>Hemoglobin subunit gamma</fullName>
    </recommendedName>
    <alternativeName>
        <fullName>Gamma-globin</fullName>
    </alternativeName>
    <alternativeName>
        <fullName>Hemoglobin gamma chain</fullName>
    </alternativeName>
</protein>
<name>HBG_DUGDU</name>
<dbReference type="EMBL" id="DQ091218">
    <property type="protein sequence ID" value="AAZ22689.1"/>
    <property type="molecule type" value="Genomic_DNA"/>
</dbReference>
<dbReference type="SMR" id="Q45XH5"/>
<dbReference type="GO" id="GO:0072562">
    <property type="term" value="C:blood microparticle"/>
    <property type="evidence" value="ECO:0007669"/>
    <property type="project" value="TreeGrafter"/>
</dbReference>
<dbReference type="GO" id="GO:0031838">
    <property type="term" value="C:haptoglobin-hemoglobin complex"/>
    <property type="evidence" value="ECO:0007669"/>
    <property type="project" value="TreeGrafter"/>
</dbReference>
<dbReference type="GO" id="GO:0005833">
    <property type="term" value="C:hemoglobin complex"/>
    <property type="evidence" value="ECO:0007669"/>
    <property type="project" value="InterPro"/>
</dbReference>
<dbReference type="GO" id="GO:0031720">
    <property type="term" value="F:haptoglobin binding"/>
    <property type="evidence" value="ECO:0007669"/>
    <property type="project" value="TreeGrafter"/>
</dbReference>
<dbReference type="GO" id="GO:0020037">
    <property type="term" value="F:heme binding"/>
    <property type="evidence" value="ECO:0007669"/>
    <property type="project" value="InterPro"/>
</dbReference>
<dbReference type="GO" id="GO:0031721">
    <property type="term" value="F:hemoglobin alpha binding"/>
    <property type="evidence" value="ECO:0007669"/>
    <property type="project" value="TreeGrafter"/>
</dbReference>
<dbReference type="GO" id="GO:0046872">
    <property type="term" value="F:metal ion binding"/>
    <property type="evidence" value="ECO:0007669"/>
    <property type="project" value="UniProtKB-KW"/>
</dbReference>
<dbReference type="GO" id="GO:0043177">
    <property type="term" value="F:organic acid binding"/>
    <property type="evidence" value="ECO:0007669"/>
    <property type="project" value="TreeGrafter"/>
</dbReference>
<dbReference type="GO" id="GO:0019825">
    <property type="term" value="F:oxygen binding"/>
    <property type="evidence" value="ECO:0007669"/>
    <property type="project" value="InterPro"/>
</dbReference>
<dbReference type="GO" id="GO:0005344">
    <property type="term" value="F:oxygen carrier activity"/>
    <property type="evidence" value="ECO:0007669"/>
    <property type="project" value="UniProtKB-KW"/>
</dbReference>
<dbReference type="GO" id="GO:0004601">
    <property type="term" value="F:peroxidase activity"/>
    <property type="evidence" value="ECO:0007669"/>
    <property type="project" value="TreeGrafter"/>
</dbReference>
<dbReference type="GO" id="GO:0042744">
    <property type="term" value="P:hydrogen peroxide catabolic process"/>
    <property type="evidence" value="ECO:0007669"/>
    <property type="project" value="TreeGrafter"/>
</dbReference>
<dbReference type="CDD" id="cd08925">
    <property type="entry name" value="Hb-beta-like"/>
    <property type="match status" value="1"/>
</dbReference>
<dbReference type="FunFam" id="1.10.490.10:FF:000001">
    <property type="entry name" value="Hemoglobin subunit beta"/>
    <property type="match status" value="1"/>
</dbReference>
<dbReference type="Gene3D" id="1.10.490.10">
    <property type="entry name" value="Globins"/>
    <property type="match status" value="1"/>
</dbReference>
<dbReference type="InterPro" id="IPR000971">
    <property type="entry name" value="Globin"/>
</dbReference>
<dbReference type="InterPro" id="IPR009050">
    <property type="entry name" value="Globin-like_sf"/>
</dbReference>
<dbReference type="InterPro" id="IPR012292">
    <property type="entry name" value="Globin/Proto"/>
</dbReference>
<dbReference type="InterPro" id="IPR002337">
    <property type="entry name" value="Hemoglobin_b"/>
</dbReference>
<dbReference type="InterPro" id="IPR050056">
    <property type="entry name" value="Hemoglobin_oxygen_transport"/>
</dbReference>
<dbReference type="PANTHER" id="PTHR11442">
    <property type="entry name" value="HEMOGLOBIN FAMILY MEMBER"/>
    <property type="match status" value="1"/>
</dbReference>
<dbReference type="PANTHER" id="PTHR11442:SF7">
    <property type="entry name" value="HEMOGLOBIN SUBUNIT EPSILON"/>
    <property type="match status" value="1"/>
</dbReference>
<dbReference type="Pfam" id="PF00042">
    <property type="entry name" value="Globin"/>
    <property type="match status" value="1"/>
</dbReference>
<dbReference type="PRINTS" id="PR00814">
    <property type="entry name" value="BETAHAEM"/>
</dbReference>
<dbReference type="SUPFAM" id="SSF46458">
    <property type="entry name" value="Globin-like"/>
    <property type="match status" value="1"/>
</dbReference>
<dbReference type="PROSITE" id="PS01033">
    <property type="entry name" value="GLOBIN"/>
    <property type="match status" value="1"/>
</dbReference>
<keyword id="KW-0349">Heme</keyword>
<keyword id="KW-0408">Iron</keyword>
<keyword id="KW-0479">Metal-binding</keyword>
<keyword id="KW-0561">Oxygen transport</keyword>
<keyword id="KW-0813">Transport</keyword>
<organism>
    <name type="scientific">Dugong dugon</name>
    <name type="common">Dugong</name>
    <name type="synonym">Trichechus dugon</name>
    <dbReference type="NCBI Taxonomy" id="29137"/>
    <lineage>
        <taxon>Eukaryota</taxon>
        <taxon>Metazoa</taxon>
        <taxon>Chordata</taxon>
        <taxon>Craniata</taxon>
        <taxon>Vertebrata</taxon>
        <taxon>Euteleostomi</taxon>
        <taxon>Mammalia</taxon>
        <taxon>Eutheria</taxon>
        <taxon>Afrotheria</taxon>
        <taxon>Sirenia</taxon>
        <taxon>Dugongidae</taxon>
        <taxon>Dugong</taxon>
    </lineage>
</organism>
<gene>
    <name type="primary">HBG</name>
</gene>